<gene>
    <name evidence="1" type="primary">lepA</name>
    <name type="ordered locus">Cyan7425_1111</name>
</gene>
<feature type="chain" id="PRO_1000118047" description="Elongation factor 4">
    <location>
        <begin position="1"/>
        <end position="603"/>
    </location>
</feature>
<feature type="domain" description="tr-type G">
    <location>
        <begin position="7"/>
        <end position="189"/>
    </location>
</feature>
<feature type="binding site" evidence="1">
    <location>
        <begin position="19"/>
        <end position="24"/>
    </location>
    <ligand>
        <name>GTP</name>
        <dbReference type="ChEBI" id="CHEBI:37565"/>
    </ligand>
</feature>
<feature type="binding site" evidence="1">
    <location>
        <begin position="136"/>
        <end position="139"/>
    </location>
    <ligand>
        <name>GTP</name>
        <dbReference type="ChEBI" id="CHEBI:37565"/>
    </ligand>
</feature>
<evidence type="ECO:0000255" key="1">
    <source>
        <dbReference type="HAMAP-Rule" id="MF_00071"/>
    </source>
</evidence>
<comment type="function">
    <text evidence="1">Required for accurate and efficient protein synthesis under certain stress conditions. May act as a fidelity factor of the translation reaction, by catalyzing a one-codon backward translocation of tRNAs on improperly translocated ribosomes. Back-translocation proceeds from a post-translocation (POST) complex to a pre-translocation (PRE) complex, thus giving elongation factor G a second chance to translocate the tRNAs correctly. Binds to ribosomes in a GTP-dependent manner.</text>
</comment>
<comment type="catalytic activity">
    <reaction evidence="1">
        <text>GTP + H2O = GDP + phosphate + H(+)</text>
        <dbReference type="Rhea" id="RHEA:19669"/>
        <dbReference type="ChEBI" id="CHEBI:15377"/>
        <dbReference type="ChEBI" id="CHEBI:15378"/>
        <dbReference type="ChEBI" id="CHEBI:37565"/>
        <dbReference type="ChEBI" id="CHEBI:43474"/>
        <dbReference type="ChEBI" id="CHEBI:58189"/>
        <dbReference type="EC" id="3.6.5.n1"/>
    </reaction>
</comment>
<comment type="subcellular location">
    <subcellularLocation>
        <location evidence="1">Cell inner membrane</location>
        <topology evidence="1">Peripheral membrane protein</topology>
        <orientation evidence="1">Cytoplasmic side</orientation>
    </subcellularLocation>
</comment>
<comment type="similarity">
    <text evidence="1">Belongs to the TRAFAC class translation factor GTPase superfamily. Classic translation factor GTPase family. LepA subfamily.</text>
</comment>
<dbReference type="EC" id="3.6.5.n1" evidence="1"/>
<dbReference type="EMBL" id="CP001344">
    <property type="protein sequence ID" value="ACL43496.1"/>
    <property type="molecule type" value="Genomic_DNA"/>
</dbReference>
<dbReference type="SMR" id="B8HLK8"/>
<dbReference type="STRING" id="395961.Cyan7425_1111"/>
<dbReference type="KEGG" id="cyn:Cyan7425_1111"/>
<dbReference type="eggNOG" id="COG0481">
    <property type="taxonomic scope" value="Bacteria"/>
</dbReference>
<dbReference type="HOGENOM" id="CLU_009995_3_3_3"/>
<dbReference type="OrthoDB" id="580826at2"/>
<dbReference type="GO" id="GO:0005886">
    <property type="term" value="C:plasma membrane"/>
    <property type="evidence" value="ECO:0007669"/>
    <property type="project" value="UniProtKB-SubCell"/>
</dbReference>
<dbReference type="GO" id="GO:0005525">
    <property type="term" value="F:GTP binding"/>
    <property type="evidence" value="ECO:0007669"/>
    <property type="project" value="UniProtKB-KW"/>
</dbReference>
<dbReference type="GO" id="GO:0003924">
    <property type="term" value="F:GTPase activity"/>
    <property type="evidence" value="ECO:0007669"/>
    <property type="project" value="InterPro"/>
</dbReference>
<dbReference type="GO" id="GO:0043022">
    <property type="term" value="F:ribosome binding"/>
    <property type="evidence" value="ECO:0007669"/>
    <property type="project" value="TreeGrafter"/>
</dbReference>
<dbReference type="GO" id="GO:0045727">
    <property type="term" value="P:positive regulation of translation"/>
    <property type="evidence" value="ECO:0007669"/>
    <property type="project" value="TreeGrafter"/>
</dbReference>
<dbReference type="GO" id="GO:0006412">
    <property type="term" value="P:translation"/>
    <property type="evidence" value="ECO:0007669"/>
    <property type="project" value="UniProtKB-KW"/>
</dbReference>
<dbReference type="CDD" id="cd03699">
    <property type="entry name" value="EF4_II"/>
    <property type="match status" value="1"/>
</dbReference>
<dbReference type="CDD" id="cd16260">
    <property type="entry name" value="EF4_III"/>
    <property type="match status" value="1"/>
</dbReference>
<dbReference type="CDD" id="cd01890">
    <property type="entry name" value="LepA"/>
    <property type="match status" value="1"/>
</dbReference>
<dbReference type="CDD" id="cd03709">
    <property type="entry name" value="lepA_C"/>
    <property type="match status" value="1"/>
</dbReference>
<dbReference type="FunFam" id="3.40.50.300:FF:000078">
    <property type="entry name" value="Elongation factor 4"/>
    <property type="match status" value="1"/>
</dbReference>
<dbReference type="FunFam" id="2.40.30.10:FF:000015">
    <property type="entry name" value="Translation factor GUF1, mitochondrial"/>
    <property type="match status" value="1"/>
</dbReference>
<dbReference type="FunFam" id="3.30.70.240:FF:000007">
    <property type="entry name" value="Translation factor GUF1, mitochondrial"/>
    <property type="match status" value="1"/>
</dbReference>
<dbReference type="FunFam" id="3.30.70.2570:FF:000001">
    <property type="entry name" value="Translation factor GUF1, mitochondrial"/>
    <property type="match status" value="1"/>
</dbReference>
<dbReference type="FunFam" id="3.30.70.870:FF:000004">
    <property type="entry name" value="Translation factor GUF1, mitochondrial"/>
    <property type="match status" value="1"/>
</dbReference>
<dbReference type="Gene3D" id="3.30.70.240">
    <property type="match status" value="1"/>
</dbReference>
<dbReference type="Gene3D" id="3.30.70.2570">
    <property type="entry name" value="Elongation factor 4, C-terminal domain"/>
    <property type="match status" value="1"/>
</dbReference>
<dbReference type="Gene3D" id="3.30.70.870">
    <property type="entry name" value="Elongation Factor G (Translational Gtpase), domain 3"/>
    <property type="match status" value="1"/>
</dbReference>
<dbReference type="Gene3D" id="3.40.50.300">
    <property type="entry name" value="P-loop containing nucleotide triphosphate hydrolases"/>
    <property type="match status" value="1"/>
</dbReference>
<dbReference type="Gene3D" id="2.40.30.10">
    <property type="entry name" value="Translation factors"/>
    <property type="match status" value="1"/>
</dbReference>
<dbReference type="HAMAP" id="MF_03138">
    <property type="entry name" value="GUFP"/>
    <property type="match status" value="1"/>
</dbReference>
<dbReference type="HAMAP" id="MF_00071">
    <property type="entry name" value="LepA"/>
    <property type="match status" value="1"/>
</dbReference>
<dbReference type="InterPro" id="IPR006297">
    <property type="entry name" value="EF-4"/>
</dbReference>
<dbReference type="InterPro" id="IPR035647">
    <property type="entry name" value="EFG_III/V"/>
</dbReference>
<dbReference type="InterPro" id="IPR000640">
    <property type="entry name" value="EFG_V-like"/>
</dbReference>
<dbReference type="InterPro" id="IPR004161">
    <property type="entry name" value="EFTu-like_2"/>
</dbReference>
<dbReference type="InterPro" id="IPR031157">
    <property type="entry name" value="G_TR_CS"/>
</dbReference>
<dbReference type="InterPro" id="IPR027518">
    <property type="entry name" value="GUFP"/>
</dbReference>
<dbReference type="InterPro" id="IPR038363">
    <property type="entry name" value="LepA_C_sf"/>
</dbReference>
<dbReference type="InterPro" id="IPR013842">
    <property type="entry name" value="LepA_CTD"/>
</dbReference>
<dbReference type="InterPro" id="IPR035654">
    <property type="entry name" value="LepA_IV"/>
</dbReference>
<dbReference type="InterPro" id="IPR027417">
    <property type="entry name" value="P-loop_NTPase"/>
</dbReference>
<dbReference type="InterPro" id="IPR005225">
    <property type="entry name" value="Small_GTP-bd"/>
</dbReference>
<dbReference type="InterPro" id="IPR000795">
    <property type="entry name" value="T_Tr_GTP-bd_dom"/>
</dbReference>
<dbReference type="NCBIfam" id="TIGR01393">
    <property type="entry name" value="lepA"/>
    <property type="match status" value="1"/>
</dbReference>
<dbReference type="NCBIfam" id="TIGR00231">
    <property type="entry name" value="small_GTP"/>
    <property type="match status" value="1"/>
</dbReference>
<dbReference type="PANTHER" id="PTHR43512:SF4">
    <property type="entry name" value="TRANSLATION FACTOR GUF1 HOMOLOG, CHLOROPLASTIC"/>
    <property type="match status" value="1"/>
</dbReference>
<dbReference type="PANTHER" id="PTHR43512">
    <property type="entry name" value="TRANSLATION FACTOR GUF1-RELATED"/>
    <property type="match status" value="1"/>
</dbReference>
<dbReference type="Pfam" id="PF00679">
    <property type="entry name" value="EFG_C"/>
    <property type="match status" value="1"/>
</dbReference>
<dbReference type="Pfam" id="PF00009">
    <property type="entry name" value="GTP_EFTU"/>
    <property type="match status" value="1"/>
</dbReference>
<dbReference type="Pfam" id="PF03144">
    <property type="entry name" value="GTP_EFTU_D2"/>
    <property type="match status" value="1"/>
</dbReference>
<dbReference type="Pfam" id="PF06421">
    <property type="entry name" value="LepA_C"/>
    <property type="match status" value="1"/>
</dbReference>
<dbReference type="PRINTS" id="PR00315">
    <property type="entry name" value="ELONGATNFCT"/>
</dbReference>
<dbReference type="SMART" id="SM00838">
    <property type="entry name" value="EFG_C"/>
    <property type="match status" value="1"/>
</dbReference>
<dbReference type="SUPFAM" id="SSF54980">
    <property type="entry name" value="EF-G C-terminal domain-like"/>
    <property type="match status" value="2"/>
</dbReference>
<dbReference type="SUPFAM" id="SSF52540">
    <property type="entry name" value="P-loop containing nucleoside triphosphate hydrolases"/>
    <property type="match status" value="1"/>
</dbReference>
<dbReference type="PROSITE" id="PS00301">
    <property type="entry name" value="G_TR_1"/>
    <property type="match status" value="1"/>
</dbReference>
<dbReference type="PROSITE" id="PS51722">
    <property type="entry name" value="G_TR_2"/>
    <property type="match status" value="1"/>
</dbReference>
<protein>
    <recommendedName>
        <fullName evidence="1">Elongation factor 4</fullName>
        <shortName evidence="1">EF-4</shortName>
        <ecNumber evidence="1">3.6.5.n1</ecNumber>
    </recommendedName>
    <alternativeName>
        <fullName evidence="1">Ribosomal back-translocase LepA</fullName>
    </alternativeName>
</protein>
<proteinExistence type="inferred from homology"/>
<organism>
    <name type="scientific">Cyanothece sp. (strain PCC 7425 / ATCC 29141)</name>
    <dbReference type="NCBI Taxonomy" id="395961"/>
    <lineage>
        <taxon>Bacteria</taxon>
        <taxon>Bacillati</taxon>
        <taxon>Cyanobacteriota</taxon>
        <taxon>Cyanophyceae</taxon>
        <taxon>Gomontiellales</taxon>
        <taxon>Cyanothecaceae</taxon>
        <taxon>Cyanothece</taxon>
    </lineage>
</organism>
<keyword id="KW-0997">Cell inner membrane</keyword>
<keyword id="KW-1003">Cell membrane</keyword>
<keyword id="KW-0342">GTP-binding</keyword>
<keyword id="KW-0378">Hydrolase</keyword>
<keyword id="KW-0472">Membrane</keyword>
<keyword id="KW-0547">Nucleotide-binding</keyword>
<keyword id="KW-0648">Protein biosynthesis</keyword>
<sequence>MTEAPVSRIRNFSIIAHIDHGKSTLADRLLQTTGTVAARDMKEQFLDNMDLERERGITIKLQAARMNYRGEDGEEYVLNLIDTPGHVDFSYEVSRSLAACEGALLVVDASQGVEAQTLANVYLALEHNLEIIPVLNKIDLPGAEPERVKQEIEEIIGLDCSGAVMASAKEGIGIAEILESIVHLVPPPQDTVSEPLRALIFDSYYDPYRGVVVYFRVMDGTVKQGDKIRLMASGKEYQIDELGVLSPAQVQVKELHAGEVGYLAAAIKAVTDARVGDTITLATAPAKTPLPGYEEAKPMVFCGMFPTDADQFEDLREALEKLRLNDAALQYEPETSSAMGFGFRCGFLGLLHMEIVQERLEREYNLDLIITAPSVVYRVTPLKGEVFMIDNPSTLPDPQHREKIEEPYVQVEMITPETYVGTLMELAQTRRGVFKDMKYLTPERTTLIYELPLAEIVTDFFDQMKSRSRGYASMEYQLIGYRENPLVKLDILINSDPVDSLAAIVHRDKAYGVGRALVSKLRELIPRHQFKIPIQAAIGSKVIASESIPALRKDVLAKCYGGDITRKKKLLEKQKAGKKRMKAVGSVDVPQEAFMAVLRLKDE</sequence>
<reference key="1">
    <citation type="journal article" date="2011" name="MBio">
        <title>Novel metabolic attributes of the genus Cyanothece, comprising a group of unicellular nitrogen-fixing Cyanobacteria.</title>
        <authorList>
            <person name="Bandyopadhyay A."/>
            <person name="Elvitigala T."/>
            <person name="Welsh E."/>
            <person name="Stockel J."/>
            <person name="Liberton M."/>
            <person name="Min H."/>
            <person name="Sherman L.A."/>
            <person name="Pakrasi H.B."/>
        </authorList>
    </citation>
    <scope>NUCLEOTIDE SEQUENCE [LARGE SCALE GENOMIC DNA]</scope>
    <source>
        <strain>PCC 7425 / ATCC 29141</strain>
    </source>
</reference>
<accession>B8HLK8</accession>
<name>LEPA_CYAP4</name>